<comment type="function">
    <text evidence="1">N-acetylglutamate synthase involved in arginine biosynthesis.</text>
</comment>
<comment type="catalytic activity">
    <reaction>
        <text>L-glutamate + acetyl-CoA = N-acetyl-L-glutamate + CoA + H(+)</text>
        <dbReference type="Rhea" id="RHEA:24292"/>
        <dbReference type="ChEBI" id="CHEBI:15378"/>
        <dbReference type="ChEBI" id="CHEBI:29985"/>
        <dbReference type="ChEBI" id="CHEBI:44337"/>
        <dbReference type="ChEBI" id="CHEBI:57287"/>
        <dbReference type="ChEBI" id="CHEBI:57288"/>
        <dbReference type="EC" id="2.3.1.1"/>
    </reaction>
</comment>
<comment type="pathway">
    <text>Amino-acid biosynthesis; L-arginine biosynthesis; N(2)-acetyl-L-ornithine from L-glutamate: step 1/4.</text>
</comment>
<comment type="subcellular location">
    <subcellularLocation>
        <location evidence="1">Mitochondrion</location>
    </subcellularLocation>
</comment>
<comment type="similarity">
    <text evidence="4">Belongs to the acetyltransferase family.</text>
</comment>
<protein>
    <recommendedName>
        <fullName>Amino-acid acetyltransferase, mitochondrial</fullName>
        <ecNumber>2.3.1.1</ecNumber>
    </recommendedName>
    <alternativeName>
        <fullName>Arginine-requiring protein 2</fullName>
    </alternativeName>
    <alternativeName>
        <fullName>Glutamate N-acetyltransferase</fullName>
    </alternativeName>
    <alternativeName>
        <fullName>N-acetylglutamate synthase</fullName>
        <shortName>AGS</shortName>
        <shortName>NAGS</shortName>
    </alternativeName>
</protein>
<keyword id="KW-0012">Acyltransferase</keyword>
<keyword id="KW-0028">Amino-acid biosynthesis</keyword>
<keyword id="KW-0496">Mitochondrion</keyword>
<keyword id="KW-1185">Reference proteome</keyword>
<keyword id="KW-0808">Transferase</keyword>
<keyword id="KW-0809">Transit peptide</keyword>
<dbReference type="EC" id="2.3.1.1"/>
<dbReference type="EMBL" id="CR382124">
    <property type="protein sequence ID" value="CAH00448.1"/>
    <property type="molecule type" value="Genomic_DNA"/>
</dbReference>
<dbReference type="RefSeq" id="XP_453352.1">
    <property type="nucleotide sequence ID" value="XM_453352.1"/>
</dbReference>
<dbReference type="SMR" id="Q6CRT7"/>
<dbReference type="FunCoup" id="Q6CRT7">
    <property type="interactions" value="114"/>
</dbReference>
<dbReference type="STRING" id="284590.Q6CRT7"/>
<dbReference type="PaxDb" id="284590-Q6CRT7"/>
<dbReference type="KEGG" id="kla:KLLA0_D06523g"/>
<dbReference type="eggNOG" id="KOG2436">
    <property type="taxonomic scope" value="Eukaryota"/>
</dbReference>
<dbReference type="HOGENOM" id="CLU_013088_0_0_1"/>
<dbReference type="InParanoid" id="Q6CRT7"/>
<dbReference type="OMA" id="HAWYELP"/>
<dbReference type="UniPathway" id="UPA00068">
    <property type="reaction ID" value="UER00106"/>
</dbReference>
<dbReference type="Proteomes" id="UP000000598">
    <property type="component" value="Chromosome D"/>
</dbReference>
<dbReference type="GO" id="GO:0005759">
    <property type="term" value="C:mitochondrial matrix"/>
    <property type="evidence" value="ECO:0007669"/>
    <property type="project" value="TreeGrafter"/>
</dbReference>
<dbReference type="GO" id="GO:0004042">
    <property type="term" value="F:L-glutamate N-acetyltransferase activity"/>
    <property type="evidence" value="ECO:0007669"/>
    <property type="project" value="InterPro"/>
</dbReference>
<dbReference type="GO" id="GO:0006526">
    <property type="term" value="P:L-arginine biosynthetic process"/>
    <property type="evidence" value="ECO:0007669"/>
    <property type="project" value="UniProtKB-UniPathway"/>
</dbReference>
<dbReference type="GO" id="GO:0006592">
    <property type="term" value="P:ornithine biosynthetic process"/>
    <property type="evidence" value="ECO:0007669"/>
    <property type="project" value="TreeGrafter"/>
</dbReference>
<dbReference type="Gene3D" id="3.40.630.30">
    <property type="match status" value="1"/>
</dbReference>
<dbReference type="InterPro" id="IPR011190">
    <property type="entry name" value="GlcNAc_Synth_fun"/>
</dbReference>
<dbReference type="InterPro" id="IPR006855">
    <property type="entry name" value="Vertebrate-like_GNAT_dom"/>
</dbReference>
<dbReference type="PANTHER" id="PTHR23342:SF4">
    <property type="entry name" value="AMINO-ACID ACETYLTRANSFERASE, MITOCHONDRIAL"/>
    <property type="match status" value="1"/>
</dbReference>
<dbReference type="PANTHER" id="PTHR23342">
    <property type="entry name" value="N-ACETYLGLUTAMATE SYNTHASE"/>
    <property type="match status" value="1"/>
</dbReference>
<dbReference type="Pfam" id="PF04768">
    <property type="entry name" value="NAT"/>
    <property type="match status" value="1"/>
</dbReference>
<dbReference type="PIRSF" id="PIRSF007892">
    <property type="entry name" value="NAGS_fungal"/>
    <property type="match status" value="1"/>
</dbReference>
<dbReference type="PROSITE" id="PS51731">
    <property type="entry name" value="GNAT_NAGS"/>
    <property type="match status" value="1"/>
</dbReference>
<reference key="1">
    <citation type="journal article" date="2004" name="Nature">
        <title>Genome evolution in yeasts.</title>
        <authorList>
            <person name="Dujon B."/>
            <person name="Sherman D."/>
            <person name="Fischer G."/>
            <person name="Durrens P."/>
            <person name="Casaregola S."/>
            <person name="Lafontaine I."/>
            <person name="de Montigny J."/>
            <person name="Marck C."/>
            <person name="Neuveglise C."/>
            <person name="Talla E."/>
            <person name="Goffard N."/>
            <person name="Frangeul L."/>
            <person name="Aigle M."/>
            <person name="Anthouard V."/>
            <person name="Babour A."/>
            <person name="Barbe V."/>
            <person name="Barnay S."/>
            <person name="Blanchin S."/>
            <person name="Beckerich J.-M."/>
            <person name="Beyne E."/>
            <person name="Bleykasten C."/>
            <person name="Boisrame A."/>
            <person name="Boyer J."/>
            <person name="Cattolico L."/>
            <person name="Confanioleri F."/>
            <person name="de Daruvar A."/>
            <person name="Despons L."/>
            <person name="Fabre E."/>
            <person name="Fairhead C."/>
            <person name="Ferry-Dumazet H."/>
            <person name="Groppi A."/>
            <person name="Hantraye F."/>
            <person name="Hennequin C."/>
            <person name="Jauniaux N."/>
            <person name="Joyet P."/>
            <person name="Kachouri R."/>
            <person name="Kerrest A."/>
            <person name="Koszul R."/>
            <person name="Lemaire M."/>
            <person name="Lesur I."/>
            <person name="Ma L."/>
            <person name="Muller H."/>
            <person name="Nicaud J.-M."/>
            <person name="Nikolski M."/>
            <person name="Oztas S."/>
            <person name="Ozier-Kalogeropoulos O."/>
            <person name="Pellenz S."/>
            <person name="Potier S."/>
            <person name="Richard G.-F."/>
            <person name="Straub M.-L."/>
            <person name="Suleau A."/>
            <person name="Swennen D."/>
            <person name="Tekaia F."/>
            <person name="Wesolowski-Louvel M."/>
            <person name="Westhof E."/>
            <person name="Wirth B."/>
            <person name="Zeniou-Meyer M."/>
            <person name="Zivanovic Y."/>
            <person name="Bolotin-Fukuhara M."/>
            <person name="Thierry A."/>
            <person name="Bouchier C."/>
            <person name="Caudron B."/>
            <person name="Scarpelli C."/>
            <person name="Gaillardin C."/>
            <person name="Weissenbach J."/>
            <person name="Wincker P."/>
            <person name="Souciet J.-L."/>
        </authorList>
    </citation>
    <scope>NUCLEOTIDE SEQUENCE [LARGE SCALE GENOMIC DNA]</scope>
    <source>
        <strain>ATCC 8585 / CBS 2359 / DSM 70799 / NBRC 1267 / NRRL Y-1140 / WM37</strain>
    </source>
</reference>
<name>NAGS_KLULA</name>
<evidence type="ECO:0000250" key="1"/>
<evidence type="ECO:0000255" key="2"/>
<evidence type="ECO:0000255" key="3">
    <source>
        <dbReference type="PROSITE-ProRule" id="PRU00532"/>
    </source>
</evidence>
<evidence type="ECO:0000305" key="4"/>
<sequence length="552" mass="63063">MIKTWIRCLTTEVRYHQPNAHGRSLVMSVLNSTVTKREAKDYLNKYTDENNHHYCLVFLRHLSEYSDNVLSGFSKTVSRIQTLGLRPILIVDPLCQDISYQSQRLDNHLHDQSLKSIIVLDPITIGERGSIDVKLPILNPHIIPIIEPYQYHEKEAFKKLAGDPSRFLSSLVSNLPINIDKVFLISKYGGLPSVERHTNSHVFVNLSQEYRELRNSYQNQLEKLESIQVDNTEKNLVESLQLFLNQDKILSNSDQLKCHMEDLEIMNKTLSVLPHSSTGLITTILAGSKLSDNNPLVYNILTDRSLISSSLPRFKRSAAAQSKSWYELPSSNVEEEVTSANDSVLVTTVFKKGIDIHIFDFRTLTDDNSIGLPPSQATQTGKSDPVSKKLDLNKLNGIINSSFKRSLDLSHYLGRINGNIASIIVIGDYEGIAILTYEGPKDKQFVYLDKFAVAQKLKGSLGISDIIFNLMFRKFPHELIWRSREDNVVNKWYFQRSTGVLHLSLDLGNDDQKQSIFKLFYYGNPESESFHNVERLRDYAKYVRDITPSWHK</sequence>
<organism>
    <name type="scientific">Kluyveromyces lactis (strain ATCC 8585 / CBS 2359 / DSM 70799 / NBRC 1267 / NRRL Y-1140 / WM37)</name>
    <name type="common">Yeast</name>
    <name type="synonym">Candida sphaerica</name>
    <dbReference type="NCBI Taxonomy" id="284590"/>
    <lineage>
        <taxon>Eukaryota</taxon>
        <taxon>Fungi</taxon>
        <taxon>Dikarya</taxon>
        <taxon>Ascomycota</taxon>
        <taxon>Saccharomycotina</taxon>
        <taxon>Saccharomycetes</taxon>
        <taxon>Saccharomycetales</taxon>
        <taxon>Saccharomycetaceae</taxon>
        <taxon>Kluyveromyces</taxon>
    </lineage>
</organism>
<accession>Q6CRT7</accession>
<gene>
    <name type="primary">ARG2</name>
    <name type="ordered locus">KLLA0D06523g</name>
</gene>
<feature type="transit peptide" description="Mitochondrion" evidence="2">
    <location>
        <begin position="1"/>
        <end position="32"/>
    </location>
</feature>
<feature type="chain" id="PRO_0000372564" description="Amino-acid acetyltransferase, mitochondrial">
    <location>
        <begin position="33"/>
        <end position="552"/>
    </location>
</feature>
<feature type="domain" description="N-acetyltransferase" evidence="3">
    <location>
        <begin position="379"/>
        <end position="545"/>
    </location>
</feature>
<proteinExistence type="inferred from homology"/>